<reference key="1">
    <citation type="journal article" date="2009" name="Environ. Microbiol.">
        <title>The genome of Polaromonas naphthalenivorans strain CJ2, isolated from coal tar-contaminated sediment, reveals physiological and metabolic versatility and evolution through extensive horizontal gene transfer.</title>
        <authorList>
            <person name="Yagi J.M."/>
            <person name="Sims D."/>
            <person name="Brettin T."/>
            <person name="Bruce D."/>
            <person name="Madsen E.L."/>
        </authorList>
    </citation>
    <scope>NUCLEOTIDE SEQUENCE [LARGE SCALE GENOMIC DNA]</scope>
    <source>
        <strain>CJ2</strain>
    </source>
</reference>
<keyword id="KW-0240">DNA-directed RNA polymerase</keyword>
<keyword id="KW-0548">Nucleotidyltransferase</keyword>
<keyword id="KW-1185">Reference proteome</keyword>
<keyword id="KW-0804">Transcription</keyword>
<keyword id="KW-0808">Transferase</keyword>
<organism>
    <name type="scientific">Polaromonas naphthalenivorans (strain CJ2)</name>
    <dbReference type="NCBI Taxonomy" id="365044"/>
    <lineage>
        <taxon>Bacteria</taxon>
        <taxon>Pseudomonadati</taxon>
        <taxon>Pseudomonadota</taxon>
        <taxon>Betaproteobacteria</taxon>
        <taxon>Burkholderiales</taxon>
        <taxon>Comamonadaceae</taxon>
        <taxon>Polaromonas</taxon>
    </lineage>
</organism>
<name>RPOB_POLNA</name>
<proteinExistence type="inferred from homology"/>
<feature type="chain" id="PRO_0000300367" description="DNA-directed RNA polymerase subunit beta">
    <location>
        <begin position="1"/>
        <end position="1370"/>
    </location>
</feature>
<gene>
    <name evidence="1" type="primary">rpoB</name>
    <name type="ordered locus">Pnap_3640</name>
</gene>
<comment type="function">
    <text evidence="1">DNA-dependent RNA polymerase catalyzes the transcription of DNA into RNA using the four ribonucleoside triphosphates as substrates.</text>
</comment>
<comment type="catalytic activity">
    <reaction evidence="1">
        <text>RNA(n) + a ribonucleoside 5'-triphosphate = RNA(n+1) + diphosphate</text>
        <dbReference type="Rhea" id="RHEA:21248"/>
        <dbReference type="Rhea" id="RHEA-COMP:14527"/>
        <dbReference type="Rhea" id="RHEA-COMP:17342"/>
        <dbReference type="ChEBI" id="CHEBI:33019"/>
        <dbReference type="ChEBI" id="CHEBI:61557"/>
        <dbReference type="ChEBI" id="CHEBI:140395"/>
        <dbReference type="EC" id="2.7.7.6"/>
    </reaction>
</comment>
<comment type="subunit">
    <text evidence="1">The RNAP catalytic core consists of 2 alpha, 1 beta, 1 beta' and 1 omega subunit. When a sigma factor is associated with the core the holoenzyme is formed, which can initiate transcription.</text>
</comment>
<comment type="similarity">
    <text evidence="1">Belongs to the RNA polymerase beta chain family.</text>
</comment>
<protein>
    <recommendedName>
        <fullName evidence="1">DNA-directed RNA polymerase subunit beta</fullName>
        <shortName evidence="1">RNAP subunit beta</shortName>
        <ecNumber evidence="1">2.7.7.6</ecNumber>
    </recommendedName>
    <alternativeName>
        <fullName evidence="1">RNA polymerase subunit beta</fullName>
    </alternativeName>
    <alternativeName>
        <fullName evidence="1">Transcriptase subunit beta</fullName>
    </alternativeName>
</protein>
<evidence type="ECO:0000255" key="1">
    <source>
        <dbReference type="HAMAP-Rule" id="MF_01321"/>
    </source>
</evidence>
<sequence>MAYSFTERKRIRKSFGNRESVLTVPYLLQMQKDAYIAFLQADRAPQKRMVEGLQAAFQNAFPIVSHNGFVEMKFIEYNLAKPAFDVRECQTRGLTFASAVRAKVQLIIYDRESSTSQSKVVKEVKEQEVYMGEVPLMTDKGSFVINGTERVIVSQLHRSPGVFFEHDKGKTHSSGKLLFSARIIPYRGSWLDFEFDPKDILYFRVDRRRKMPVTILLKAIGLNHESILANFFVFDNFRLMDSGAQMEFVAERMRGEVARFDLTDKAGKVVVAKDKRITVRHTRELEQSGTTSISVPEDFLIGRVVAKNIIDTDTGEIIAKANDELTELLLKKLRTAGIQNLQVLYTNELDQGAYISQTLRADETADEFAARVAIYRMMRPGEPPTEDAVQALFQRLFYNPDTYDLSRVGRMKFNARVGRDESTGPMVMTNEDILAVVKILVDLRNGNGEVDDIDHLGNRRVRCVGELAENQYRTGLARIEKAVKERLGQAEQEPLMPHDLINSKPISAALKEFFGASQLSQFMDQTNPLAEITHKRRVSALGPGGLTRERAGFEVRDVHVTHYGRVCPIETPEGPNIGLINSLALYARLNEYGFIETPYRRVADSKVTMEIDYLSAIEEGKYVIAQANAALDNEGRLTGDLVSAREKGESILVSAERVQYMDVSPAQIVSVAASLVPFLEHDDANRALMGANMSRQAVPVLRPEKPLVGTGIERVAAVDSGTVVTATRGGVVDYVDATRIVVRVNDAEALAGEIGVDIYNLIKYQRSNQNTNIHQRPIVKMGDKLAKGDVVADGASTDLGEIAIGQNMLIGFMPWNGYNFEDSILISERVVAEDRYTSIHIEELVVMARDTKLGSEEITRDIPNLSEQQLNRLDESGIIYVGAEVQPGDTLVGKVTPKGETTLTPEEKLLRAIFGEKASDVKDTSLRVSQGSSGTVIDVQVFTREGITRDKRAQQIIDDELKRYRLDLNDQLRIVEADAFDRIEKLLIGKIANGGPKKLAKGTKLDKAYLTDVEKYHWFDIRPADDEVASQLESIKNSMEQTRHSFDLSFEEKRKKLTQGDELPSGVLKMVKVYLAVKRRLQPGDKMAGRHGNKGVVSKIVPVEDMPHMADGTPCDIVLNPLGVPSRMNVGQVLEVHLGWAAKGLGQRIGDMLQAESKVAELRQFMDTLYNKSGRTEDLASLSDEQVVEMAQNLTTGVPFATPVFDGASEADIMTMLQLAYPDAVAKAKGLTPTRTQAQLYDGRTGDAFERTTTVGYMHFLKLHHLVDDKMHARSTGPYSLVTQQPLGGKAQFGGQRFGEMEVWALEAYGAAYVLQEMLTVKSDDVVGRTKVYESIVKGEHAITAGMPESFNVLVKEIRSLGIDMELERS</sequence>
<accession>A1VTF8</accession>
<dbReference type="EC" id="2.7.7.6" evidence="1"/>
<dbReference type="EMBL" id="CP000529">
    <property type="protein sequence ID" value="ABM38936.1"/>
    <property type="molecule type" value="Genomic_DNA"/>
</dbReference>
<dbReference type="RefSeq" id="WP_011803003.1">
    <property type="nucleotide sequence ID" value="NC_008781.1"/>
</dbReference>
<dbReference type="SMR" id="A1VTF8"/>
<dbReference type="STRING" id="365044.Pnap_3640"/>
<dbReference type="KEGG" id="pna:Pnap_3640"/>
<dbReference type="eggNOG" id="COG0085">
    <property type="taxonomic scope" value="Bacteria"/>
</dbReference>
<dbReference type="HOGENOM" id="CLU_000524_4_3_4"/>
<dbReference type="OrthoDB" id="9803954at2"/>
<dbReference type="Proteomes" id="UP000000644">
    <property type="component" value="Chromosome"/>
</dbReference>
<dbReference type="GO" id="GO:0000428">
    <property type="term" value="C:DNA-directed RNA polymerase complex"/>
    <property type="evidence" value="ECO:0007669"/>
    <property type="project" value="UniProtKB-KW"/>
</dbReference>
<dbReference type="GO" id="GO:0003677">
    <property type="term" value="F:DNA binding"/>
    <property type="evidence" value="ECO:0007669"/>
    <property type="project" value="UniProtKB-UniRule"/>
</dbReference>
<dbReference type="GO" id="GO:0003899">
    <property type="term" value="F:DNA-directed RNA polymerase activity"/>
    <property type="evidence" value="ECO:0007669"/>
    <property type="project" value="UniProtKB-UniRule"/>
</dbReference>
<dbReference type="GO" id="GO:0032549">
    <property type="term" value="F:ribonucleoside binding"/>
    <property type="evidence" value="ECO:0007669"/>
    <property type="project" value="InterPro"/>
</dbReference>
<dbReference type="GO" id="GO:0006351">
    <property type="term" value="P:DNA-templated transcription"/>
    <property type="evidence" value="ECO:0007669"/>
    <property type="project" value="UniProtKB-UniRule"/>
</dbReference>
<dbReference type="CDD" id="cd00653">
    <property type="entry name" value="RNA_pol_B_RPB2"/>
    <property type="match status" value="1"/>
</dbReference>
<dbReference type="FunFam" id="2.40.50.100:FF:000006">
    <property type="entry name" value="DNA-directed RNA polymerase subunit beta"/>
    <property type="match status" value="1"/>
</dbReference>
<dbReference type="FunFam" id="3.90.1800.10:FF:000001">
    <property type="entry name" value="DNA-directed RNA polymerase subunit beta"/>
    <property type="match status" value="1"/>
</dbReference>
<dbReference type="Gene3D" id="2.40.50.100">
    <property type="match status" value="1"/>
</dbReference>
<dbReference type="Gene3D" id="2.40.50.150">
    <property type="match status" value="1"/>
</dbReference>
<dbReference type="Gene3D" id="3.90.1100.10">
    <property type="match status" value="2"/>
</dbReference>
<dbReference type="Gene3D" id="2.30.150.10">
    <property type="entry name" value="DNA-directed RNA polymerase, beta subunit, external 1 domain"/>
    <property type="match status" value="1"/>
</dbReference>
<dbReference type="Gene3D" id="2.40.270.10">
    <property type="entry name" value="DNA-directed RNA polymerase, subunit 2, domain 6"/>
    <property type="match status" value="1"/>
</dbReference>
<dbReference type="Gene3D" id="3.90.1800.10">
    <property type="entry name" value="RNA polymerase alpha subunit dimerisation domain"/>
    <property type="match status" value="1"/>
</dbReference>
<dbReference type="Gene3D" id="3.90.1110.10">
    <property type="entry name" value="RNA polymerase Rpb2, domain 2"/>
    <property type="match status" value="1"/>
</dbReference>
<dbReference type="HAMAP" id="MF_01321">
    <property type="entry name" value="RNApol_bact_RpoB"/>
    <property type="match status" value="1"/>
</dbReference>
<dbReference type="InterPro" id="IPR042107">
    <property type="entry name" value="DNA-dir_RNA_pol_bsu_ext_1_sf"/>
</dbReference>
<dbReference type="InterPro" id="IPR019462">
    <property type="entry name" value="DNA-dir_RNA_pol_bsu_external_1"/>
</dbReference>
<dbReference type="InterPro" id="IPR015712">
    <property type="entry name" value="DNA-dir_RNA_pol_su2"/>
</dbReference>
<dbReference type="InterPro" id="IPR007120">
    <property type="entry name" value="DNA-dir_RNAP_su2_dom"/>
</dbReference>
<dbReference type="InterPro" id="IPR037033">
    <property type="entry name" value="DNA-dir_RNAP_su2_hyb_sf"/>
</dbReference>
<dbReference type="InterPro" id="IPR010243">
    <property type="entry name" value="RNA_pol_bsu_bac"/>
</dbReference>
<dbReference type="InterPro" id="IPR007121">
    <property type="entry name" value="RNA_pol_bsu_CS"/>
</dbReference>
<dbReference type="InterPro" id="IPR007644">
    <property type="entry name" value="RNA_pol_bsu_protrusion"/>
</dbReference>
<dbReference type="InterPro" id="IPR007642">
    <property type="entry name" value="RNA_pol_Rpb2_2"/>
</dbReference>
<dbReference type="InterPro" id="IPR037034">
    <property type="entry name" value="RNA_pol_Rpb2_2_sf"/>
</dbReference>
<dbReference type="InterPro" id="IPR007645">
    <property type="entry name" value="RNA_pol_Rpb2_3"/>
</dbReference>
<dbReference type="InterPro" id="IPR007641">
    <property type="entry name" value="RNA_pol_Rpb2_7"/>
</dbReference>
<dbReference type="InterPro" id="IPR014724">
    <property type="entry name" value="RNA_pol_RPB2_OB-fold"/>
</dbReference>
<dbReference type="NCBIfam" id="NF001616">
    <property type="entry name" value="PRK00405.1"/>
    <property type="match status" value="1"/>
</dbReference>
<dbReference type="NCBIfam" id="TIGR02013">
    <property type="entry name" value="rpoB"/>
    <property type="match status" value="1"/>
</dbReference>
<dbReference type="PANTHER" id="PTHR20856">
    <property type="entry name" value="DNA-DIRECTED RNA POLYMERASE I SUBUNIT 2"/>
    <property type="match status" value="1"/>
</dbReference>
<dbReference type="Pfam" id="PF04563">
    <property type="entry name" value="RNA_pol_Rpb2_1"/>
    <property type="match status" value="1"/>
</dbReference>
<dbReference type="Pfam" id="PF04561">
    <property type="entry name" value="RNA_pol_Rpb2_2"/>
    <property type="match status" value="2"/>
</dbReference>
<dbReference type="Pfam" id="PF04565">
    <property type="entry name" value="RNA_pol_Rpb2_3"/>
    <property type="match status" value="1"/>
</dbReference>
<dbReference type="Pfam" id="PF10385">
    <property type="entry name" value="RNA_pol_Rpb2_45"/>
    <property type="match status" value="1"/>
</dbReference>
<dbReference type="Pfam" id="PF00562">
    <property type="entry name" value="RNA_pol_Rpb2_6"/>
    <property type="match status" value="1"/>
</dbReference>
<dbReference type="Pfam" id="PF04560">
    <property type="entry name" value="RNA_pol_Rpb2_7"/>
    <property type="match status" value="1"/>
</dbReference>
<dbReference type="SUPFAM" id="SSF64484">
    <property type="entry name" value="beta and beta-prime subunits of DNA dependent RNA-polymerase"/>
    <property type="match status" value="1"/>
</dbReference>
<dbReference type="PROSITE" id="PS01166">
    <property type="entry name" value="RNA_POL_BETA"/>
    <property type="match status" value="1"/>
</dbReference>